<keyword id="KW-0025">Alternative splicing</keyword>
<keyword id="KW-1017">Isopeptide bond</keyword>
<keyword id="KW-0539">Nucleus</keyword>
<keyword id="KW-0597">Phosphoprotein</keyword>
<keyword id="KW-1267">Proteomics identification</keyword>
<keyword id="KW-1185">Reference proteome</keyword>
<keyword id="KW-0678">Repressor</keyword>
<keyword id="KW-0804">Transcription</keyword>
<keyword id="KW-0805">Transcription regulation</keyword>
<keyword id="KW-0832">Ubl conjugation</keyword>
<accession>Q15742</accession>
<accession>B2RAK3</accession>
<accession>O76006</accession>
<accession>Q14797</accession>
<reference key="1">
    <citation type="journal article" date="1996" name="Mol. Cell. Biol.">
        <title>NAB2, a corepressor of NGFI-A (Egr-1) and Krox20, is induced by proliferative and differentiative stimuli.</title>
        <authorList>
            <person name="Svaren J."/>
            <person name="Sevetson B.R."/>
            <person name="Apel E.D."/>
            <person name="Zimonjic D.B."/>
            <person name="Popescu N.C."/>
            <person name="Milbrandt J."/>
        </authorList>
    </citation>
    <scope>NUCLEOTIDE SEQUENCE [MRNA] (ISOFORMS 1 AND 2)</scope>
    <source>
        <tissue>Placenta</tissue>
    </source>
</reference>
<reference key="2">
    <citation type="submission" date="2000-05" db="EMBL/GenBank/DDBJ databases">
        <title>Genomic organization of the Mader/NAB2 gene.</title>
        <authorList>
            <person name="Gerlinger M."/>
            <person name="Johnson J.P."/>
        </authorList>
    </citation>
    <scope>NUCLEOTIDE SEQUENCE (ISOFORM 1)</scope>
</reference>
<reference key="3">
    <citation type="journal article" date="2004" name="Nat. Genet.">
        <title>Complete sequencing and characterization of 21,243 full-length human cDNAs.</title>
        <authorList>
            <person name="Ota T."/>
            <person name="Suzuki Y."/>
            <person name="Nishikawa T."/>
            <person name="Otsuki T."/>
            <person name="Sugiyama T."/>
            <person name="Irie R."/>
            <person name="Wakamatsu A."/>
            <person name="Hayashi K."/>
            <person name="Sato H."/>
            <person name="Nagai K."/>
            <person name="Kimura K."/>
            <person name="Makita H."/>
            <person name="Sekine M."/>
            <person name="Obayashi M."/>
            <person name="Nishi T."/>
            <person name="Shibahara T."/>
            <person name="Tanaka T."/>
            <person name="Ishii S."/>
            <person name="Yamamoto J."/>
            <person name="Saito K."/>
            <person name="Kawai Y."/>
            <person name="Isono Y."/>
            <person name="Nakamura Y."/>
            <person name="Nagahari K."/>
            <person name="Murakami K."/>
            <person name="Yasuda T."/>
            <person name="Iwayanagi T."/>
            <person name="Wagatsuma M."/>
            <person name="Shiratori A."/>
            <person name="Sudo H."/>
            <person name="Hosoiri T."/>
            <person name="Kaku Y."/>
            <person name="Kodaira H."/>
            <person name="Kondo H."/>
            <person name="Sugawara M."/>
            <person name="Takahashi M."/>
            <person name="Kanda K."/>
            <person name="Yokoi T."/>
            <person name="Furuya T."/>
            <person name="Kikkawa E."/>
            <person name="Omura Y."/>
            <person name="Abe K."/>
            <person name="Kamihara K."/>
            <person name="Katsuta N."/>
            <person name="Sato K."/>
            <person name="Tanikawa M."/>
            <person name="Yamazaki M."/>
            <person name="Ninomiya K."/>
            <person name="Ishibashi T."/>
            <person name="Yamashita H."/>
            <person name="Murakawa K."/>
            <person name="Fujimori K."/>
            <person name="Tanai H."/>
            <person name="Kimata M."/>
            <person name="Watanabe M."/>
            <person name="Hiraoka S."/>
            <person name="Chiba Y."/>
            <person name="Ishida S."/>
            <person name="Ono Y."/>
            <person name="Takiguchi S."/>
            <person name="Watanabe S."/>
            <person name="Yosida M."/>
            <person name="Hotuta T."/>
            <person name="Kusano J."/>
            <person name="Kanehori K."/>
            <person name="Takahashi-Fujii A."/>
            <person name="Hara H."/>
            <person name="Tanase T.-O."/>
            <person name="Nomura Y."/>
            <person name="Togiya S."/>
            <person name="Komai F."/>
            <person name="Hara R."/>
            <person name="Takeuchi K."/>
            <person name="Arita M."/>
            <person name="Imose N."/>
            <person name="Musashino K."/>
            <person name="Yuuki H."/>
            <person name="Oshima A."/>
            <person name="Sasaki N."/>
            <person name="Aotsuka S."/>
            <person name="Yoshikawa Y."/>
            <person name="Matsunawa H."/>
            <person name="Ichihara T."/>
            <person name="Shiohata N."/>
            <person name="Sano S."/>
            <person name="Moriya S."/>
            <person name="Momiyama H."/>
            <person name="Satoh N."/>
            <person name="Takami S."/>
            <person name="Terashima Y."/>
            <person name="Suzuki O."/>
            <person name="Nakagawa S."/>
            <person name="Senoh A."/>
            <person name="Mizoguchi H."/>
            <person name="Goto Y."/>
            <person name="Shimizu F."/>
            <person name="Wakebe H."/>
            <person name="Hishigaki H."/>
            <person name="Watanabe T."/>
            <person name="Sugiyama A."/>
            <person name="Takemoto M."/>
            <person name="Kawakami B."/>
            <person name="Yamazaki M."/>
            <person name="Watanabe K."/>
            <person name="Kumagai A."/>
            <person name="Itakura S."/>
            <person name="Fukuzumi Y."/>
            <person name="Fujimori Y."/>
            <person name="Komiyama M."/>
            <person name="Tashiro H."/>
            <person name="Tanigami A."/>
            <person name="Fujiwara T."/>
            <person name="Ono T."/>
            <person name="Yamada K."/>
            <person name="Fujii Y."/>
            <person name="Ozaki K."/>
            <person name="Hirao M."/>
            <person name="Ohmori Y."/>
            <person name="Kawabata A."/>
            <person name="Hikiji T."/>
            <person name="Kobatake N."/>
            <person name="Inagaki H."/>
            <person name="Ikema Y."/>
            <person name="Okamoto S."/>
            <person name="Okitani R."/>
            <person name="Kawakami T."/>
            <person name="Noguchi S."/>
            <person name="Itoh T."/>
            <person name="Shigeta K."/>
            <person name="Senba T."/>
            <person name="Matsumura K."/>
            <person name="Nakajima Y."/>
            <person name="Mizuno T."/>
            <person name="Morinaga M."/>
            <person name="Sasaki M."/>
            <person name="Togashi T."/>
            <person name="Oyama M."/>
            <person name="Hata H."/>
            <person name="Watanabe M."/>
            <person name="Komatsu T."/>
            <person name="Mizushima-Sugano J."/>
            <person name="Satoh T."/>
            <person name="Shirai Y."/>
            <person name="Takahashi Y."/>
            <person name="Nakagawa K."/>
            <person name="Okumura K."/>
            <person name="Nagase T."/>
            <person name="Nomura N."/>
            <person name="Kikuchi H."/>
            <person name="Masuho Y."/>
            <person name="Yamashita R."/>
            <person name="Nakai K."/>
            <person name="Yada T."/>
            <person name="Nakamura Y."/>
            <person name="Ohara O."/>
            <person name="Isogai T."/>
            <person name="Sugano S."/>
        </authorList>
    </citation>
    <scope>NUCLEOTIDE SEQUENCE [LARGE SCALE MRNA] (ISOFORM 1)</scope>
</reference>
<reference key="4">
    <citation type="submission" date="2005-07" db="EMBL/GenBank/DDBJ databases">
        <authorList>
            <person name="Mural R.J."/>
            <person name="Istrail S."/>
            <person name="Sutton G.G."/>
            <person name="Florea L."/>
            <person name="Halpern A.L."/>
            <person name="Mobarry C.M."/>
            <person name="Lippert R."/>
            <person name="Walenz B."/>
            <person name="Shatkay H."/>
            <person name="Dew I."/>
            <person name="Miller J.R."/>
            <person name="Flanigan M.J."/>
            <person name="Edwards N.J."/>
            <person name="Bolanos R."/>
            <person name="Fasulo D."/>
            <person name="Halldorsson B.V."/>
            <person name="Hannenhalli S."/>
            <person name="Turner R."/>
            <person name="Yooseph S."/>
            <person name="Lu F."/>
            <person name="Nusskern D.R."/>
            <person name="Shue B.C."/>
            <person name="Zheng X.H."/>
            <person name="Zhong F."/>
            <person name="Delcher A.L."/>
            <person name="Huson D.H."/>
            <person name="Kravitz S.A."/>
            <person name="Mouchard L."/>
            <person name="Reinert K."/>
            <person name="Remington K.A."/>
            <person name="Clark A.G."/>
            <person name="Waterman M.S."/>
            <person name="Eichler E.E."/>
            <person name="Adams M.D."/>
            <person name="Hunkapiller M.W."/>
            <person name="Myers E.W."/>
            <person name="Venter J.C."/>
        </authorList>
    </citation>
    <scope>NUCLEOTIDE SEQUENCE [LARGE SCALE GENOMIC DNA]</scope>
</reference>
<reference key="5">
    <citation type="journal article" date="2004" name="Genome Res.">
        <title>The status, quality, and expansion of the NIH full-length cDNA project: the Mammalian Gene Collection (MGC).</title>
        <authorList>
            <consortium name="The MGC Project Team"/>
        </authorList>
    </citation>
    <scope>NUCLEOTIDE SEQUENCE [LARGE SCALE MRNA] (ISOFORM 1)</scope>
    <source>
        <tissue>Skin</tissue>
    </source>
</reference>
<reference key="6">
    <citation type="journal article" date="1996" name="Oncogene">
        <title>Mader: a novel nuclear protein over expressed in human melanomas.</title>
        <authorList>
            <person name="Kirsch K.H."/>
            <person name="Korradi Y."/>
            <person name="Johnson J.P."/>
        </authorList>
    </citation>
    <scope>NUCLEOTIDE SEQUENCE [GENOMIC DNA / MRNA] OF 50-525 (ISOFORM 1)</scope>
</reference>
<reference key="7">
    <citation type="submission" date="1998-09" db="EMBL/GenBank/DDBJ databases">
        <authorList>
            <person name="Johnson J.P."/>
        </authorList>
    </citation>
    <scope>PARTIAL NUCLEOTIDE SEQUENCE (ISOFORM 3)</scope>
</reference>
<reference key="8">
    <citation type="journal article" date="1997" name="Genomics">
        <title>The Nab2 and Stat6 genes share a common transcription termination region.</title>
        <authorList>
            <person name="Svaren J."/>
            <person name="Apel E.D."/>
            <person name="Simburger K.S."/>
            <person name="Jenkins N.A."/>
            <person name="Gilbert D.J."/>
            <person name="Copeland N.G."/>
            <person name="Milbrandt J."/>
        </authorList>
    </citation>
    <scope>PARTIAL NUCLEOTIDE SEQUENCE [MRNA] (ISOFORM 2)</scope>
</reference>
<reference key="9">
    <citation type="journal article" date="2008" name="Proc. Natl. Acad. Sci. U.S.A.">
        <title>A quantitative atlas of mitotic phosphorylation.</title>
        <authorList>
            <person name="Dephoure N."/>
            <person name="Zhou C."/>
            <person name="Villen J."/>
            <person name="Beausoleil S.A."/>
            <person name="Bakalarski C.E."/>
            <person name="Elledge S.J."/>
            <person name="Gygi S.P."/>
        </authorList>
    </citation>
    <scope>PHOSPHORYLATION [LARGE SCALE ANALYSIS] AT SER-6</scope>
    <scope>IDENTIFICATION BY MASS SPECTROMETRY [LARGE SCALE ANALYSIS]</scope>
    <source>
        <tissue>Cervix carcinoma</tissue>
    </source>
</reference>
<reference key="10">
    <citation type="journal article" date="2009" name="Anal. Chem.">
        <title>Lys-N and trypsin cover complementary parts of the phosphoproteome in a refined SCX-based approach.</title>
        <authorList>
            <person name="Gauci S."/>
            <person name="Helbig A.O."/>
            <person name="Slijper M."/>
            <person name="Krijgsveld J."/>
            <person name="Heck A.J."/>
            <person name="Mohammed S."/>
        </authorList>
    </citation>
    <scope>IDENTIFICATION BY MASS SPECTROMETRY [LARGE SCALE ANALYSIS]</scope>
</reference>
<reference key="11">
    <citation type="journal article" date="2009" name="Sci. Signal.">
        <title>Quantitative phosphoproteomic analysis of T cell receptor signaling reveals system-wide modulation of protein-protein interactions.</title>
        <authorList>
            <person name="Mayya V."/>
            <person name="Lundgren D.H."/>
            <person name="Hwang S.-I."/>
            <person name="Rezaul K."/>
            <person name="Wu L."/>
            <person name="Eng J.K."/>
            <person name="Rodionov V."/>
            <person name="Han D.K."/>
        </authorList>
    </citation>
    <scope>PHOSPHORYLATION [LARGE SCALE ANALYSIS] AT SER-6</scope>
    <scope>IDENTIFICATION BY MASS SPECTROMETRY [LARGE SCALE ANALYSIS]</scope>
    <source>
        <tissue>Leukemic T-cell</tissue>
    </source>
</reference>
<reference key="12">
    <citation type="journal article" date="2011" name="EMBO Rep.">
        <title>The transcription factor Krox20 is an E3 ligase that sumoylates its Nab coregulators.</title>
        <authorList>
            <person name="Garcia-Gutierrez P."/>
            <person name="Juarez-Vicente F."/>
            <person name="Gallardo-Chamizo F."/>
            <person name="Charnay P."/>
            <person name="Garcia-Dominguez M."/>
        </authorList>
    </citation>
    <scope>SUMOYLATION AT LYS-379 AND LYS-517 BY EGR2</scope>
</reference>
<reference key="13">
    <citation type="journal article" date="2011" name="Sci. Signal.">
        <title>System-wide temporal characterization of the proteome and phosphoproteome of human embryonic stem cell differentiation.</title>
        <authorList>
            <person name="Rigbolt K.T."/>
            <person name="Prokhorova T.A."/>
            <person name="Akimov V."/>
            <person name="Henningsen J."/>
            <person name="Johansen P.T."/>
            <person name="Kratchmarova I."/>
            <person name="Kassem M."/>
            <person name="Mann M."/>
            <person name="Olsen J.V."/>
            <person name="Blagoev B."/>
        </authorList>
    </citation>
    <scope>PHOSPHORYLATION [LARGE SCALE ANALYSIS] AT SER-159 AND SER-162</scope>
    <scope>IDENTIFICATION BY MASS SPECTROMETRY [LARGE SCALE ANALYSIS]</scope>
</reference>
<reference key="14">
    <citation type="journal article" date="2013" name="J. Proteome Res.">
        <title>Toward a comprehensive characterization of a human cancer cell phosphoproteome.</title>
        <authorList>
            <person name="Zhou H."/>
            <person name="Di Palma S."/>
            <person name="Preisinger C."/>
            <person name="Peng M."/>
            <person name="Polat A.N."/>
            <person name="Heck A.J."/>
            <person name="Mohammed S."/>
        </authorList>
    </citation>
    <scope>PHOSPHORYLATION [LARGE SCALE ANALYSIS] AT SER-6; SER-159; SER-162 AND SER-171</scope>
    <scope>IDENTIFICATION BY MASS SPECTROMETRY [LARGE SCALE ANALYSIS]</scope>
    <source>
        <tissue>Cervix carcinoma</tissue>
        <tissue>Erythroleukemia</tissue>
    </source>
</reference>
<reference key="15">
    <citation type="journal article" date="2014" name="J. Proteomics">
        <title>An enzyme assisted RP-RPLC approach for in-depth analysis of human liver phosphoproteome.</title>
        <authorList>
            <person name="Bian Y."/>
            <person name="Song C."/>
            <person name="Cheng K."/>
            <person name="Dong M."/>
            <person name="Wang F."/>
            <person name="Huang J."/>
            <person name="Sun D."/>
            <person name="Wang L."/>
            <person name="Ye M."/>
            <person name="Zou H."/>
        </authorList>
    </citation>
    <scope>PHOSPHORYLATION [LARGE SCALE ANALYSIS] AT SER-6 AND SER-171</scope>
    <scope>IDENTIFICATION BY MASS SPECTROMETRY [LARGE SCALE ANALYSIS]</scope>
    <source>
        <tissue>Liver</tissue>
    </source>
</reference>
<reference key="16">
    <citation type="journal article" date="2017" name="Nat. Struct. Mol. Biol.">
        <title>Site-specific mapping of the human SUMO proteome reveals co-modification with phosphorylation.</title>
        <authorList>
            <person name="Hendriks I.A."/>
            <person name="Lyon D."/>
            <person name="Young C."/>
            <person name="Jensen L.J."/>
            <person name="Vertegaal A.C."/>
            <person name="Nielsen M.L."/>
        </authorList>
    </citation>
    <scope>SUMOYLATION [LARGE SCALE ANALYSIS] AT LYS-517</scope>
    <scope>IDENTIFICATION BY MASS SPECTROMETRY [LARGE SCALE ANALYSIS]</scope>
</reference>
<comment type="function">
    <text evidence="1">Acts as a transcriptional repressor for zinc finger transcription factors EGR1 and EGR2. Isoform 2 lacks repression ability (By similarity).</text>
</comment>
<comment type="subunit">
    <text evidence="1">Homomultimers may associate with EGR1 bound to DNA.</text>
</comment>
<comment type="interaction">
    <interactant intactId="EBI-8641936">
        <id>Q15742</id>
    </interactant>
    <interactant intactId="EBI-12154305">
        <id>Q12955-5</id>
        <label>ANK3</label>
    </interactant>
    <organismsDiffer>false</organismsDiffer>
    <experiments>3</experiments>
</comment>
<comment type="interaction">
    <interactant intactId="EBI-8641936">
        <id>Q15742</id>
    </interactant>
    <interactant intactId="EBI-17183751">
        <id>X5D778</id>
        <label>ANKRD11</label>
    </interactant>
    <organismsDiffer>false</organismsDiffer>
    <experiments>3</experiments>
</comment>
<comment type="interaction">
    <interactant intactId="EBI-8641936">
        <id>Q15742</id>
    </interactant>
    <interactant intactId="EBI-712912">
        <id>Q9HC52</id>
        <label>CBX8</label>
    </interactant>
    <organismsDiffer>false</organismsDiffer>
    <experiments>3</experiments>
</comment>
<comment type="interaction">
    <interactant intactId="EBI-8641936">
        <id>Q15742</id>
    </interactant>
    <interactant intactId="EBI-10961624">
        <id>Q2TAC2-2</id>
        <label>CCDC57</label>
    </interactant>
    <organismsDiffer>false</organismsDiffer>
    <experiments>3</experiments>
</comment>
<comment type="interaction">
    <interactant intactId="EBI-8641936">
        <id>Q15742</id>
    </interactant>
    <interactant intactId="EBI-10175300">
        <id>Q8TD31-3</id>
        <label>CCHCR1</label>
    </interactant>
    <organismsDiffer>false</organismsDiffer>
    <experiments>3</experiments>
</comment>
<comment type="interaction">
    <interactant intactId="EBI-8641936">
        <id>Q15742</id>
    </interactant>
    <interactant intactId="EBI-396137">
        <id>Q9UJX2</id>
        <label>CDC23</label>
    </interactant>
    <organismsDiffer>false</organismsDiffer>
    <experiments>3</experiments>
</comment>
<comment type="interaction">
    <interactant intactId="EBI-8641936">
        <id>Q15742</id>
    </interactant>
    <interactant intactId="EBI-1188472">
        <id>P78358</id>
        <label>CTAG1B</label>
    </interactant>
    <organismsDiffer>false</organismsDiffer>
    <experiments>3</experiments>
</comment>
<comment type="interaction">
    <interactant intactId="EBI-8641936">
        <id>Q15742</id>
    </interactant>
    <interactant intactId="EBI-11962928">
        <id>Q9UI47-2</id>
        <label>CTNNA3</label>
    </interactant>
    <organismsDiffer>false</organismsDiffer>
    <experiments>3</experiments>
</comment>
<comment type="interaction">
    <interactant intactId="EBI-8641936">
        <id>Q15742</id>
    </interactant>
    <interactant intactId="EBI-5453285">
        <id>Q2TBE0</id>
        <label>CWF19L2</label>
    </interactant>
    <organismsDiffer>false</organismsDiffer>
    <experiments>6</experiments>
</comment>
<comment type="interaction">
    <interactant intactId="EBI-8641936">
        <id>Q15742</id>
    </interactant>
    <interactant intactId="EBI-351257">
        <id>P26196</id>
        <label>DDX6</label>
    </interactant>
    <organismsDiffer>false</organismsDiffer>
    <experiments>3</experiments>
</comment>
<comment type="interaction">
    <interactant intactId="EBI-8641936">
        <id>Q15742</id>
    </interactant>
    <interactant intactId="EBI-742953">
        <id>Q9BY27</id>
        <label>DGCR6L</label>
    </interactant>
    <organismsDiffer>false</organismsDiffer>
    <experiments>3</experiments>
</comment>
<comment type="interaction">
    <interactant intactId="EBI-8641936">
        <id>Q15742</id>
    </interactant>
    <interactant intactId="EBI-750565">
        <id>P55039</id>
        <label>DRG2</label>
    </interactant>
    <organismsDiffer>false</organismsDiffer>
    <experiments>3</experiments>
</comment>
<comment type="interaction">
    <interactant intactId="EBI-8641936">
        <id>Q15742</id>
    </interactant>
    <interactant intactId="EBI-742350">
        <id>Q14241</id>
        <label>ELOA</label>
    </interactant>
    <organismsDiffer>false</organismsDiffer>
    <experiments>3</experiments>
</comment>
<comment type="interaction">
    <interactant intactId="EBI-8641936">
        <id>Q15742</id>
    </interactant>
    <interactant intactId="EBI-744099">
        <id>Q9H0I2</id>
        <label>ENKD1</label>
    </interactant>
    <organismsDiffer>false</organismsDiffer>
    <experiments>3</experiments>
</comment>
<comment type="interaction">
    <interactant intactId="EBI-8641936">
        <id>Q15742</id>
    </interactant>
    <interactant intactId="EBI-742102">
        <id>Q8IYI6</id>
        <label>EXOC8</label>
    </interactant>
    <organismsDiffer>false</organismsDiffer>
    <experiments>3</experiments>
</comment>
<comment type="interaction">
    <interactant intactId="EBI-8641936">
        <id>Q15742</id>
    </interactant>
    <interactant intactId="EBI-7186123">
        <id>Q8IZ13</id>
        <label>FAM200C</label>
    </interactant>
    <organismsDiffer>false</organismsDiffer>
    <experiments>7</experiments>
</comment>
<comment type="interaction">
    <interactant intactId="EBI-8641936">
        <id>Q15742</id>
    </interactant>
    <interactant intactId="EBI-8468186">
        <id>Q8IZU1</id>
        <label>FAM9A</label>
    </interactant>
    <organismsDiffer>false</organismsDiffer>
    <experiments>3</experiments>
</comment>
<comment type="interaction">
    <interactant intactId="EBI-8641936">
        <id>Q15742</id>
    </interactant>
    <interactant intactId="EBI-746252">
        <id>Q96CN9</id>
        <label>GCC1</label>
    </interactant>
    <organismsDiffer>false</organismsDiffer>
    <experiments>3</experiments>
</comment>
<comment type="interaction">
    <interactant intactId="EBI-8641936">
        <id>Q15742</id>
    </interactant>
    <interactant intactId="EBI-5916454">
        <id>A6NEM1</id>
        <label>GOLGA6L9</label>
    </interactant>
    <organismsDiffer>false</organismsDiffer>
    <experiments>3</experiments>
</comment>
<comment type="interaction">
    <interactant intactId="EBI-8641936">
        <id>Q15742</id>
    </interactant>
    <interactant intactId="EBI-7116203">
        <id>O75031</id>
        <label>HSF2BP</label>
    </interactant>
    <organismsDiffer>false</organismsDiffer>
    <experiments>3</experiments>
</comment>
<comment type="interaction">
    <interactant intactId="EBI-8641936">
        <id>Q15742</id>
    </interactant>
    <interactant intactId="EBI-752007">
        <id>Q96AA8</id>
        <label>JAKMIP2</label>
    </interactant>
    <organismsDiffer>false</organismsDiffer>
    <experiments>3</experiments>
</comment>
<comment type="interaction">
    <interactant intactId="EBI-8641936">
        <id>Q15742</id>
    </interactant>
    <interactant intactId="EBI-8472129">
        <id>Q9HAQ2</id>
        <label>KIF9</label>
    </interactant>
    <organismsDiffer>false</organismsDiffer>
    <experiments>3</experiments>
</comment>
<comment type="interaction">
    <interactant intactId="EBI-8641936">
        <id>Q15742</id>
    </interactant>
    <interactant intactId="EBI-14069005">
        <id>Q9BVG8-5</id>
        <label>KIFC3</label>
    </interactant>
    <organismsDiffer>false</organismsDiffer>
    <experiments>3</experiments>
</comment>
<comment type="interaction">
    <interactant intactId="EBI-8641936">
        <id>Q15742</id>
    </interactant>
    <interactant intactId="EBI-1047093">
        <id>O76011</id>
        <label>KRT34</label>
    </interactant>
    <organismsDiffer>false</organismsDiffer>
    <experiments>3</experiments>
</comment>
<comment type="interaction">
    <interactant intactId="EBI-8641936">
        <id>Q15742</id>
    </interactant>
    <interactant intactId="EBI-10171774">
        <id>P60410</id>
        <label>KRTAP10-8</label>
    </interactant>
    <organismsDiffer>false</organismsDiffer>
    <experiments>3</experiments>
</comment>
<comment type="interaction">
    <interactant intactId="EBI-8641936">
        <id>Q15742</id>
    </interactant>
    <interactant intactId="EBI-726510">
        <id>Q96BZ8</id>
        <label>LENG1</label>
    </interactant>
    <organismsDiffer>false</organismsDiffer>
    <experiments>6</experiments>
</comment>
<comment type="interaction">
    <interactant intactId="EBI-8641936">
        <id>Q15742</id>
    </interactant>
    <interactant intactId="EBI-739832">
        <id>Q8TBB1</id>
        <label>LNX1</label>
    </interactant>
    <organismsDiffer>false</organismsDiffer>
    <experiments>3</experiments>
</comment>
<comment type="interaction">
    <interactant intactId="EBI-8641936">
        <id>Q15742</id>
    </interactant>
    <interactant intactId="EBI-355924">
        <id>P33993</id>
        <label>MCM7</label>
    </interactant>
    <organismsDiffer>false</organismsDiffer>
    <experiments>3</experiments>
</comment>
<comment type="interaction">
    <interactant intactId="EBI-8641936">
        <id>Q15742</id>
    </interactant>
    <interactant intactId="EBI-348259">
        <id>Q96EZ8</id>
        <label>MCRS1</label>
    </interactant>
    <organismsDiffer>false</organismsDiffer>
    <experiments>3</experiments>
</comment>
<comment type="interaction">
    <interactant intactId="EBI-8641936">
        <id>Q15742</id>
    </interactant>
    <interactant intactId="EBI-14086479">
        <id>Q8IVT4</id>
        <label>MGC50722</label>
    </interactant>
    <organismsDiffer>false</organismsDiffer>
    <experiments>3</experiments>
</comment>
<comment type="interaction">
    <interactant intactId="EBI-8641936">
        <id>Q15742</id>
    </interactant>
    <interactant intactId="EBI-399246">
        <id>Q9UBU8</id>
        <label>MORF4L1</label>
    </interactant>
    <organismsDiffer>false</organismsDiffer>
    <experiments>3</experiments>
</comment>
<comment type="interaction">
    <interactant intactId="EBI-8641936">
        <id>Q15742</id>
    </interactant>
    <interactant intactId="EBI-10288852">
        <id>Q9UBU8-2</id>
        <label>MORF4L1</label>
    </interactant>
    <organismsDiffer>false</organismsDiffer>
    <experiments>3</experiments>
</comment>
<comment type="interaction">
    <interactant intactId="EBI-8641936">
        <id>Q15742</id>
    </interactant>
    <interactant intactId="EBI-399257">
        <id>Q15014</id>
        <label>MORF4L2</label>
    </interactant>
    <organismsDiffer>false</organismsDiffer>
    <experiments>3</experiments>
</comment>
<comment type="interaction">
    <interactant intactId="EBI-8641936">
        <id>Q15742</id>
    </interactant>
    <interactant intactId="EBI-8641936">
        <id>Q15742</id>
        <label>NAB2</label>
    </interactant>
    <organismsDiffer>false</organismsDiffer>
    <experiments>4</experiments>
</comment>
<comment type="interaction">
    <interactant intactId="EBI-8641936">
        <id>Q15742</id>
    </interactant>
    <interactant intactId="EBI-10249760">
        <id>Q9UHB4</id>
        <label>NDOR1</label>
    </interactant>
    <organismsDiffer>false</organismsDiffer>
    <experiments>3</experiments>
</comment>
<comment type="interaction">
    <interactant intactId="EBI-8641936">
        <id>Q15742</id>
    </interactant>
    <interactant intactId="EBI-2108053">
        <id>Q14511</id>
        <label>NEDD9</label>
    </interactant>
    <organismsDiffer>false</organismsDiffer>
    <experiments>4</experiments>
</comment>
<comment type="interaction">
    <interactant intactId="EBI-8641936">
        <id>Q15742</id>
    </interactant>
    <interactant intactId="EBI-11746523">
        <id>Q14511-2</id>
        <label>NEDD9</label>
    </interactant>
    <organismsDiffer>false</organismsDiffer>
    <experiments>3</experiments>
</comment>
<comment type="interaction">
    <interactant intactId="EBI-8641936">
        <id>Q15742</id>
    </interactant>
    <interactant intactId="EBI-744782">
        <id>Q9Y5B8</id>
        <label>NME7</label>
    </interactant>
    <organismsDiffer>false</organismsDiffer>
    <experiments>6</experiments>
</comment>
<comment type="interaction">
    <interactant intactId="EBI-8641936">
        <id>Q15742</id>
    </interactant>
    <interactant intactId="EBI-945833">
        <id>Q7Z3S9</id>
        <label>NOTCH2NLA</label>
    </interactant>
    <organismsDiffer>false</organismsDiffer>
    <experiments>3</experiments>
</comment>
<comment type="interaction">
    <interactant intactId="EBI-8641936">
        <id>Q15742</id>
    </interactant>
    <interactant intactId="EBI-741158">
        <id>Q96HA8</id>
        <label>NTAQ1</label>
    </interactant>
    <organismsDiffer>false</organismsDiffer>
    <experiments>3</experiments>
</comment>
<comment type="interaction">
    <interactant intactId="EBI-8641936">
        <id>Q15742</id>
    </interactant>
    <interactant intactId="EBI-530034">
        <id>O43189</id>
        <label>PHF1</label>
    </interactant>
    <organismsDiffer>false</organismsDiffer>
    <experiments>7</experiments>
</comment>
<comment type="interaction">
    <interactant intactId="EBI-8641936">
        <id>Q15742</id>
    </interactant>
    <interactant intactId="EBI-2861380">
        <id>Q8TCD6</id>
        <label>PHOSPHO2</label>
    </interactant>
    <organismsDiffer>false</organismsDiffer>
    <experiments>6</experiments>
</comment>
<comment type="interaction">
    <interactant intactId="EBI-8641936">
        <id>Q15742</id>
    </interactant>
    <interactant intactId="EBI-79893">
        <id>Q92569</id>
        <label>PIK3R3</label>
    </interactant>
    <organismsDiffer>false</organismsDiffer>
    <experiments>3</experiments>
</comment>
<comment type="interaction">
    <interactant intactId="EBI-8641936">
        <id>Q15742</id>
    </interactant>
    <interactant intactId="EBI-714158">
        <id>Q13526</id>
        <label>PIN1</label>
    </interactant>
    <organismsDiffer>false</organismsDiffer>
    <experiments>6</experiments>
</comment>
<comment type="interaction">
    <interactant intactId="EBI-8641936">
        <id>Q15742</id>
    </interactant>
    <interactant intactId="EBI-741582">
        <id>O60568</id>
        <label>PLOD3</label>
    </interactant>
    <organismsDiffer>false</organismsDiffer>
    <experiments>3</experiments>
</comment>
<comment type="interaction">
    <interactant intactId="EBI-8641936">
        <id>Q15742</id>
    </interactant>
    <interactant intactId="EBI-1383852">
        <id>P54646</id>
        <label>PRKAA2</label>
    </interactant>
    <organismsDiffer>false</organismsDiffer>
    <experiments>3</experiments>
</comment>
<comment type="interaction">
    <interactant intactId="EBI-8641936">
        <id>Q15742</id>
    </interactant>
    <interactant intactId="EBI-1053424">
        <id>O43741</id>
        <label>PRKAB2</label>
    </interactant>
    <organismsDiffer>false</organismsDiffer>
    <experiments>3</experiments>
</comment>
<comment type="interaction">
    <interactant intactId="EBI-8641936">
        <id>Q15742</id>
    </interactant>
    <interactant intactId="EBI-359352">
        <id>P25786</id>
        <label>PSMA1</label>
    </interactant>
    <organismsDiffer>false</organismsDiffer>
    <experiments>3</experiments>
</comment>
<comment type="interaction">
    <interactant intactId="EBI-8641936">
        <id>Q15742</id>
    </interactant>
    <interactant intactId="EBI-347462">
        <id>P47897</id>
        <label>QARS1</label>
    </interactant>
    <organismsDiffer>false</organismsDiffer>
    <experiments>3</experiments>
</comment>
<comment type="interaction">
    <interactant intactId="EBI-8641936">
        <id>Q15742</id>
    </interactant>
    <interactant intactId="EBI-712376">
        <id>P40937</id>
        <label>RFC5</label>
    </interactant>
    <organismsDiffer>false</organismsDiffer>
    <experiments>8</experiments>
</comment>
<comment type="interaction">
    <interactant intactId="EBI-8641936">
        <id>Q15742</id>
    </interactant>
    <interactant intactId="EBI-726876">
        <id>Q6NUQ1</id>
        <label>RINT1</label>
    </interactant>
    <organismsDiffer>false</organismsDiffer>
    <experiments>3</experiments>
</comment>
<comment type="interaction">
    <interactant intactId="EBI-8641936">
        <id>Q15742</id>
    </interactant>
    <interactant intactId="EBI-748391">
        <id>Q9BWG6</id>
        <label>SCNM1</label>
    </interactant>
    <organismsDiffer>false</organismsDiffer>
    <experiments>3</experiments>
</comment>
<comment type="interaction">
    <interactant intactId="EBI-8641936">
        <id>Q15742</id>
    </interactant>
    <interactant intactId="EBI-358489">
        <id>Q96GM5</id>
        <label>SMARCD1</label>
    </interactant>
    <organismsDiffer>false</organismsDiffer>
    <experiments>3</experiments>
</comment>
<comment type="interaction">
    <interactant intactId="EBI-8641936">
        <id>Q15742</id>
    </interactant>
    <interactant intactId="EBI-741237">
        <id>O60504</id>
        <label>SORBS3</label>
    </interactant>
    <organismsDiffer>false</organismsDiffer>
    <experiments>3</experiments>
</comment>
<comment type="interaction">
    <interactant intactId="EBI-8641936">
        <id>Q15742</id>
    </interactant>
    <interactant intactId="EBI-742688">
        <id>Q9NZD8</id>
        <label>SPG21</label>
    </interactant>
    <organismsDiffer>false</organismsDiffer>
    <experiments>3</experiments>
</comment>
<comment type="interaction">
    <interactant intactId="EBI-8641936">
        <id>Q15742</id>
    </interactant>
    <interactant intactId="EBI-10175576">
        <id>G2XKQ0</id>
        <label>SUMO1P1</label>
    </interactant>
    <organismsDiffer>false</organismsDiffer>
    <experiments>3</experiments>
</comment>
<comment type="interaction">
    <interactant intactId="EBI-8641936">
        <id>Q15742</id>
    </interactant>
    <interactant intactId="EBI-710310">
        <id>Q15560</id>
        <label>TCEA2</label>
    </interactant>
    <organismsDiffer>false</organismsDiffer>
    <experiments>3</experiments>
</comment>
<comment type="interaction">
    <interactant intactId="EBI-8641936">
        <id>Q15742</id>
    </interactant>
    <interactant intactId="EBI-954696">
        <id>Q8N8B7</id>
        <label>TCEANC</label>
    </interactant>
    <organismsDiffer>false</organismsDiffer>
    <experiments>3</experiments>
</comment>
<comment type="interaction">
    <interactant intactId="EBI-8641936">
        <id>Q15742</id>
    </interactant>
    <interactant intactId="EBI-11955057">
        <id>Q8N8B7-2</id>
        <label>TCEANC</label>
    </interactant>
    <organismsDiffer>false</organismsDiffer>
    <experiments>3</experiments>
</comment>
<comment type="interaction">
    <interactant intactId="EBI-8641936">
        <id>Q15742</id>
    </interactant>
    <interactant intactId="EBI-740781">
        <id>Q9BT92</id>
        <label>TCHP</label>
    </interactant>
    <organismsDiffer>false</organismsDiffer>
    <experiments>7</experiments>
</comment>
<comment type="interaction">
    <interactant intactId="EBI-8641936">
        <id>Q15742</id>
    </interactant>
    <interactant intactId="EBI-8063723">
        <id>Q8IUE0</id>
        <label>TGIF2LY</label>
    </interactant>
    <organismsDiffer>false</organismsDiffer>
    <experiments>6</experiments>
</comment>
<comment type="interaction">
    <interactant intactId="EBI-8641936">
        <id>Q15742</id>
    </interactant>
    <interactant intactId="EBI-717810">
        <id>Q08117</id>
        <label>TLE5</label>
    </interactant>
    <organismsDiffer>false</organismsDiffer>
    <experiments>3</experiments>
</comment>
<comment type="interaction">
    <interactant intactId="EBI-8641936">
        <id>Q15742</id>
    </interactant>
    <interactant intactId="EBI-11741437">
        <id>Q08117-2</id>
        <label>TLE5</label>
    </interactant>
    <organismsDiffer>false</organismsDiffer>
    <experiments>3</experiments>
</comment>
<comment type="interaction">
    <interactant intactId="EBI-8641936">
        <id>Q15742</id>
    </interactant>
    <interactant intactId="EBI-355744">
        <id>Q12933</id>
        <label>TRAF2</label>
    </interactant>
    <organismsDiffer>false</organismsDiffer>
    <experiments>3</experiments>
</comment>
<comment type="interaction">
    <interactant intactId="EBI-8641936">
        <id>Q15742</id>
    </interactant>
    <interactant intactId="EBI-740098">
        <id>P36406</id>
        <label>TRIM23</label>
    </interactant>
    <organismsDiffer>false</organismsDiffer>
    <experiments>3</experiments>
</comment>
<comment type="interaction">
    <interactant intactId="EBI-8641936">
        <id>Q15742</id>
    </interactant>
    <interactant intactId="EBI-744794">
        <id>Q9BZW7</id>
        <label>TSGA10</label>
    </interactant>
    <organismsDiffer>false</organismsDiffer>
    <experiments>3</experiments>
</comment>
<comment type="interaction">
    <interactant intactId="EBI-8641936">
        <id>Q15742</id>
    </interactant>
    <interactant intactId="EBI-10241197">
        <id>Q3SY00</id>
        <label>TSGA10IP</label>
    </interactant>
    <organismsDiffer>false</organismsDiffer>
    <experiments>3</experiments>
</comment>
<comment type="interaction">
    <interactant intactId="EBI-8641936">
        <id>Q15742</id>
    </interactant>
    <interactant intactId="EBI-948354">
        <id>Q6DKK2</id>
        <label>TTC19</label>
    </interactant>
    <organismsDiffer>false</organismsDiffer>
    <experiments>3</experiments>
</comment>
<comment type="interaction">
    <interactant intactId="EBI-8641936">
        <id>Q15742</id>
    </interactant>
    <interactant intactId="EBI-743272">
        <id>O75604</id>
        <label>USP2</label>
    </interactant>
    <organismsDiffer>false</organismsDiffer>
    <experiments>3</experiments>
</comment>
<comment type="interaction">
    <interactant intactId="EBI-8641936">
        <id>Q15742</id>
    </interactant>
    <interactant intactId="EBI-11737646">
        <id>Q5TAP6</id>
        <label>UTP14C</label>
    </interactant>
    <organismsDiffer>false</organismsDiffer>
    <experiments>3</experiments>
</comment>
<comment type="interaction">
    <interactant intactId="EBI-8641936">
        <id>Q15742</id>
    </interactant>
    <interactant intactId="EBI-2682299">
        <id>Q96NC0</id>
        <label>ZMAT2</label>
    </interactant>
    <organismsDiffer>false</organismsDiffer>
    <experiments>3</experiments>
</comment>
<comment type="interaction">
    <interactant intactId="EBI-8641936">
        <id>Q15742</id>
    </interactant>
    <interactant intactId="EBI-12030590">
        <id>Q9H0C1</id>
        <label>ZMYND12</label>
    </interactant>
    <organismsDiffer>false</organismsDiffer>
    <experiments>3</experiments>
</comment>
<comment type="interaction">
    <interactant intactId="EBI-8641936">
        <id>Q15742</id>
    </interactant>
    <interactant intactId="EBI-746595">
        <id>Q96E35</id>
        <label>ZMYND19</label>
    </interactant>
    <organismsDiffer>false</organismsDiffer>
    <experiments>7</experiments>
</comment>
<comment type="interaction">
    <interactant intactId="EBI-8641936">
        <id>Q15742</id>
    </interactant>
    <interactant intactId="EBI-740727">
        <id>Q8TAU3</id>
        <label>ZNF417</label>
    </interactant>
    <organismsDiffer>false</organismsDiffer>
    <experiments>3</experiments>
</comment>
<comment type="interaction">
    <interactant intactId="EBI-25834665">
        <id>Q15742-2</id>
    </interactant>
    <interactant intactId="EBI-718729">
        <id>P55212</id>
        <label>CASP6</label>
    </interactant>
    <organismsDiffer>false</organismsDiffer>
    <experiments>3</experiments>
</comment>
<comment type="interaction">
    <interactant intactId="EBI-25834665">
        <id>Q15742-2</id>
    </interactant>
    <interactant intactId="EBI-473886">
        <id>O00291</id>
        <label>HIP1</label>
    </interactant>
    <organismsDiffer>false</organismsDiffer>
    <experiments>3</experiments>
</comment>
<comment type="interaction">
    <interactant intactId="EBI-25834665">
        <id>Q15742-2</id>
    </interactant>
    <interactant intactId="EBI-21591415">
        <id>P13473-2</id>
        <label>LAMP2</label>
    </interactant>
    <organismsDiffer>false</organismsDiffer>
    <experiments>3</experiments>
</comment>
<comment type="subcellular location">
    <subcellularLocation>
        <location evidence="1">Nucleus</location>
    </subcellularLocation>
    <text evidence="1">Isoform 2 is not localized to the nucleus.</text>
</comment>
<comment type="alternative products">
    <event type="alternative splicing"/>
    <isoform>
        <id>Q15742-1</id>
        <name>1</name>
        <sequence type="displayed"/>
    </isoform>
    <isoform>
        <id>Q15742-2</id>
        <name>2</name>
        <sequence type="described" ref="VSP_003385 VSP_003386"/>
    </isoform>
    <isoform>
        <id>Q15742-3</id>
        <name>3</name>
        <sequence type="described" ref="VSP_003387"/>
    </isoform>
</comment>
<comment type="tissue specificity">
    <text>Widely expressed at low levels. Highly expressed in melanoma cell lines.</text>
</comment>
<comment type="induction">
    <text>By serum and phorbol myristate acetate (PMA) stimulation.</text>
</comment>
<comment type="domain">
    <text>The NAB conserved domain 1 (NCD1) interacts with EGR1 inhibitory domain and mediates multimerization.</text>
</comment>
<comment type="domain">
    <text>The NAB conserved domain 2 (NCD2) is necessary for transcriptional repression.</text>
</comment>
<comment type="PTM">
    <text evidence="4">Sumoylation by EGR2 represses EGR2 transcriptional activity in hindbrain.</text>
</comment>
<comment type="similarity">
    <text evidence="6">Belongs to the NAB family.</text>
</comment>
<organism>
    <name type="scientific">Homo sapiens</name>
    <name type="common">Human</name>
    <dbReference type="NCBI Taxonomy" id="9606"/>
    <lineage>
        <taxon>Eukaryota</taxon>
        <taxon>Metazoa</taxon>
        <taxon>Chordata</taxon>
        <taxon>Craniata</taxon>
        <taxon>Vertebrata</taxon>
        <taxon>Euteleostomi</taxon>
        <taxon>Mammalia</taxon>
        <taxon>Eutheria</taxon>
        <taxon>Euarchontoglires</taxon>
        <taxon>Primates</taxon>
        <taxon>Haplorrhini</taxon>
        <taxon>Catarrhini</taxon>
        <taxon>Hominidae</taxon>
        <taxon>Homo</taxon>
    </lineage>
</organism>
<proteinExistence type="evidence at protein level"/>
<evidence type="ECO:0000250" key="1"/>
<evidence type="ECO:0000250" key="2">
    <source>
        <dbReference type="UniProtKB" id="Q61127"/>
    </source>
</evidence>
<evidence type="ECO:0000256" key="3">
    <source>
        <dbReference type="SAM" id="MobiDB-lite"/>
    </source>
</evidence>
<evidence type="ECO:0000269" key="4">
    <source>
    </source>
</evidence>
<evidence type="ECO:0000303" key="5">
    <source>
    </source>
</evidence>
<evidence type="ECO:0000305" key="6"/>
<evidence type="ECO:0007744" key="7">
    <source>
    </source>
</evidence>
<evidence type="ECO:0007744" key="8">
    <source>
    </source>
</evidence>
<evidence type="ECO:0007744" key="9">
    <source>
    </source>
</evidence>
<evidence type="ECO:0007744" key="10">
    <source>
    </source>
</evidence>
<evidence type="ECO:0007744" key="11">
    <source>
    </source>
</evidence>
<evidence type="ECO:0007744" key="12">
    <source>
    </source>
</evidence>
<name>NAB2_HUMAN</name>
<protein>
    <recommendedName>
        <fullName>NGFI-A-binding protein 2</fullName>
    </recommendedName>
    <alternativeName>
        <fullName>EGR-1-binding protein 2</fullName>
    </alternativeName>
    <alternativeName>
        <fullName>Melanoma-associated delayed early response protein</fullName>
        <shortName>Protein MADER</shortName>
    </alternativeName>
</protein>
<sequence>MHRAPSPTAEQPPGGGDSARRTLQPRLKPSARAMALPRTLGELQLYRVLQRANLLSYYETFIQQGGDDVQQLCEAGEEEFLEIMALVGMATKPLHVRRLQKALREWATNPGLFSQPVPAVPVSSIPLFKISETAGTRKGSMSNGHGSPGEKAGSARSFSPKSPLELGEKLSPLPGGPGAGDPRIWPGRSTPESDVGAGGEEEAGSPPFSPPAGGGVPEGTGAGGLAAGGTGGGPDRLEPEMVRMVVESVERIFRSFPRGDAGEVTSLLKLNKKLARSVGHIFEMDDNDSQKEEEIRKYSIIYGRFDSKRREGKQLSLHELTINEAAAQFCMRDNTLLLRRVELFSLSRQVARESTYLSSLKGSRLHPEELGGPPLKKLKQEVGEQSHPEIQQPPPGPESYVPPYRPSLEEDSASLSGESLDGHLQAVGSCPRLTPPPADLPLALPAHGLWSRHILQQTLMDEGLRLARLVSHDRVGRLSPCVPAKPPLAEFEEGLLDRCPAPGPHPALVEGRRSSVKVEAEASRQ</sequence>
<dbReference type="EMBL" id="U48361">
    <property type="protein sequence ID" value="AAC50589.1"/>
    <property type="molecule type" value="mRNA"/>
</dbReference>
<dbReference type="EMBL" id="AF268380">
    <property type="protein sequence ID" value="AAF72545.1"/>
    <property type="molecule type" value="Genomic_DNA"/>
</dbReference>
<dbReference type="EMBL" id="AK314229">
    <property type="protein sequence ID" value="BAG36900.1"/>
    <property type="molecule type" value="mRNA"/>
</dbReference>
<dbReference type="EMBL" id="CH471054">
    <property type="protein sequence ID" value="EAW96989.1"/>
    <property type="molecule type" value="Genomic_DNA"/>
</dbReference>
<dbReference type="EMBL" id="BC065931">
    <property type="protein sequence ID" value="AAH65931.1"/>
    <property type="molecule type" value="mRNA"/>
</dbReference>
<dbReference type="EMBL" id="X70991">
    <property type="protein sequence ID" value="CAA50318.1"/>
    <property type="molecule type" value="mRNA"/>
</dbReference>
<dbReference type="EMBL" id="AJ011081">
    <property type="protein sequence ID" value="CAA09472.1"/>
    <property type="molecule type" value="Genomic_DNA"/>
</dbReference>
<dbReference type="CCDS" id="CCDS81701.1">
    <molecule id="Q15742-3"/>
</dbReference>
<dbReference type="CCDS" id="CCDS8930.1">
    <molecule id="Q15742-1"/>
</dbReference>
<dbReference type="RefSeq" id="NP_001317234.1">
    <molecule id="Q15742-3"/>
    <property type="nucleotide sequence ID" value="NM_001330305.2"/>
</dbReference>
<dbReference type="RefSeq" id="NP_005958.1">
    <molecule id="Q15742-1"/>
    <property type="nucleotide sequence ID" value="NM_005967.4"/>
</dbReference>
<dbReference type="SMR" id="Q15742"/>
<dbReference type="BioGRID" id="110747">
    <property type="interactions" value="159"/>
</dbReference>
<dbReference type="FunCoup" id="Q15742">
    <property type="interactions" value="1887"/>
</dbReference>
<dbReference type="IntAct" id="Q15742">
    <property type="interactions" value="110"/>
</dbReference>
<dbReference type="MINT" id="Q15742"/>
<dbReference type="STRING" id="9606.ENSP00000300131"/>
<dbReference type="GlyCosmos" id="Q15742">
    <property type="glycosylation" value="1 site, 1 glycan"/>
</dbReference>
<dbReference type="GlyGen" id="Q15742">
    <property type="glycosylation" value="2 sites, 1 O-linked glycan (1 site)"/>
</dbReference>
<dbReference type="iPTMnet" id="Q15742"/>
<dbReference type="PhosphoSitePlus" id="Q15742"/>
<dbReference type="BioMuta" id="NAB2"/>
<dbReference type="DMDM" id="12643729"/>
<dbReference type="jPOST" id="Q15742"/>
<dbReference type="MassIVE" id="Q15742"/>
<dbReference type="PaxDb" id="9606-ENSP00000300131"/>
<dbReference type="PeptideAtlas" id="Q15742"/>
<dbReference type="ProteomicsDB" id="60728">
    <molecule id="Q15742-1"/>
</dbReference>
<dbReference type="ProteomicsDB" id="60729">
    <molecule id="Q15742-2"/>
</dbReference>
<dbReference type="ProteomicsDB" id="60730">
    <molecule id="Q15742-3"/>
</dbReference>
<dbReference type="Pumba" id="Q15742"/>
<dbReference type="Antibodypedia" id="3858">
    <property type="antibodies" value="413 antibodies from 36 providers"/>
</dbReference>
<dbReference type="DNASU" id="4665"/>
<dbReference type="Ensembl" id="ENST00000300131.8">
    <molecule id="Q15742-1"/>
    <property type="protein sequence ID" value="ENSP00000300131.3"/>
    <property type="gene ID" value="ENSG00000166886.13"/>
</dbReference>
<dbReference type="Ensembl" id="ENST00000342556.6">
    <molecule id="Q15742-3"/>
    <property type="protein sequence ID" value="ENSP00000341491.6"/>
    <property type="gene ID" value="ENSG00000166886.13"/>
</dbReference>
<dbReference type="GeneID" id="4665"/>
<dbReference type="KEGG" id="hsa:4665"/>
<dbReference type="MANE-Select" id="ENST00000300131.8">
    <property type="protein sequence ID" value="ENSP00000300131.3"/>
    <property type="RefSeq nucleotide sequence ID" value="NM_005967.4"/>
    <property type="RefSeq protein sequence ID" value="NP_005958.1"/>
</dbReference>
<dbReference type="UCSC" id="uc001smz.3">
    <molecule id="Q15742-1"/>
    <property type="organism name" value="human"/>
</dbReference>
<dbReference type="AGR" id="HGNC:7627"/>
<dbReference type="CTD" id="4665"/>
<dbReference type="DisGeNET" id="4665"/>
<dbReference type="GeneCards" id="NAB2"/>
<dbReference type="HGNC" id="HGNC:7627">
    <property type="gene designation" value="NAB2"/>
</dbReference>
<dbReference type="HPA" id="ENSG00000166886">
    <property type="expression patterns" value="Low tissue specificity"/>
</dbReference>
<dbReference type="MalaCards" id="NAB2"/>
<dbReference type="MIM" id="602381">
    <property type="type" value="gene"/>
</dbReference>
<dbReference type="neXtProt" id="NX_Q15742"/>
<dbReference type="OpenTargets" id="ENSG00000166886"/>
<dbReference type="Orphanet" id="2126">
    <property type="disease" value="Solitary fibrous tumor"/>
</dbReference>
<dbReference type="PharmGKB" id="PA31432"/>
<dbReference type="VEuPathDB" id="HostDB:ENSG00000166886"/>
<dbReference type="eggNOG" id="KOG3835">
    <property type="taxonomic scope" value="Eukaryota"/>
</dbReference>
<dbReference type="GeneTree" id="ENSGT00390000006330"/>
<dbReference type="HOGENOM" id="CLU_029394_2_0_1"/>
<dbReference type="InParanoid" id="Q15742"/>
<dbReference type="OMA" id="AMQWGNP"/>
<dbReference type="OrthoDB" id="10028556at2759"/>
<dbReference type="PAN-GO" id="Q15742">
    <property type="GO annotations" value="4 GO annotations based on evolutionary models"/>
</dbReference>
<dbReference type="PhylomeDB" id="Q15742"/>
<dbReference type="TreeFam" id="TF315501"/>
<dbReference type="PathwayCommons" id="Q15742"/>
<dbReference type="Reactome" id="R-HSA-9031628">
    <property type="pathway name" value="NGF-stimulated transcription"/>
</dbReference>
<dbReference type="Reactome" id="R-HSA-9619665">
    <property type="pathway name" value="EGR2 and SOX10-mediated initiation of Schwann cell myelination"/>
</dbReference>
<dbReference type="SignaLink" id="Q15742"/>
<dbReference type="SIGNOR" id="Q15742"/>
<dbReference type="BioGRID-ORCS" id="4665">
    <property type="hits" value="28 hits in 1161 CRISPR screens"/>
</dbReference>
<dbReference type="ChiTaRS" id="NAB2">
    <property type="organism name" value="human"/>
</dbReference>
<dbReference type="GeneWiki" id="NAB2"/>
<dbReference type="GenomeRNAi" id="4665"/>
<dbReference type="Pharos" id="Q15742">
    <property type="development level" value="Tbio"/>
</dbReference>
<dbReference type="PRO" id="PR:Q15742"/>
<dbReference type="Proteomes" id="UP000005640">
    <property type="component" value="Chromosome 12"/>
</dbReference>
<dbReference type="RNAct" id="Q15742">
    <property type="molecule type" value="protein"/>
</dbReference>
<dbReference type="Bgee" id="ENSG00000166886">
    <property type="expression patterns" value="Expressed in right hemisphere of cerebellum and 178 other cell types or tissues"/>
</dbReference>
<dbReference type="GO" id="GO:0005654">
    <property type="term" value="C:nucleoplasm"/>
    <property type="evidence" value="ECO:0000304"/>
    <property type="project" value="Reactome"/>
</dbReference>
<dbReference type="GO" id="GO:0005634">
    <property type="term" value="C:nucleus"/>
    <property type="evidence" value="ECO:0000318"/>
    <property type="project" value="GO_Central"/>
</dbReference>
<dbReference type="GO" id="GO:0042802">
    <property type="term" value="F:identical protein binding"/>
    <property type="evidence" value="ECO:0000353"/>
    <property type="project" value="IntAct"/>
</dbReference>
<dbReference type="GO" id="GO:0003712">
    <property type="term" value="F:transcription coregulator activity"/>
    <property type="evidence" value="ECO:0000318"/>
    <property type="project" value="GO_Central"/>
</dbReference>
<dbReference type="GO" id="GO:0003714">
    <property type="term" value="F:transcription corepressor activity"/>
    <property type="evidence" value="ECO:0000304"/>
    <property type="project" value="ProtInc"/>
</dbReference>
<dbReference type="GO" id="GO:0001958">
    <property type="term" value="P:endochondral ossification"/>
    <property type="evidence" value="ECO:0007669"/>
    <property type="project" value="Ensembl"/>
</dbReference>
<dbReference type="GO" id="GO:0042552">
    <property type="term" value="P:myelination"/>
    <property type="evidence" value="ECO:0007669"/>
    <property type="project" value="Ensembl"/>
</dbReference>
<dbReference type="GO" id="GO:0016480">
    <property type="term" value="P:negative regulation of transcription by RNA polymerase III"/>
    <property type="evidence" value="ECO:0000314"/>
    <property type="project" value="MGI"/>
</dbReference>
<dbReference type="GO" id="GO:0006355">
    <property type="term" value="P:regulation of DNA-templated transcription"/>
    <property type="evidence" value="ECO:0000318"/>
    <property type="project" value="GO_Central"/>
</dbReference>
<dbReference type="GO" id="GO:0045682">
    <property type="term" value="P:regulation of epidermis development"/>
    <property type="evidence" value="ECO:0007669"/>
    <property type="project" value="Ensembl"/>
</dbReference>
<dbReference type="GO" id="GO:0014037">
    <property type="term" value="P:Schwann cell differentiation"/>
    <property type="evidence" value="ECO:0007669"/>
    <property type="project" value="Ensembl"/>
</dbReference>
<dbReference type="FunFam" id="1.20.120.2010:FF:000001">
    <property type="entry name" value="NGFI-A-binding protein 1 isoform X1"/>
    <property type="match status" value="1"/>
</dbReference>
<dbReference type="Gene3D" id="1.20.120.2010">
    <property type="entry name" value="NAB conserved domain 2"/>
    <property type="match status" value="1"/>
</dbReference>
<dbReference type="Gene3D" id="1.10.150.50">
    <property type="entry name" value="Transcription Factor, Ets-1"/>
    <property type="match status" value="1"/>
</dbReference>
<dbReference type="InterPro" id="IPR006989">
    <property type="entry name" value="NAB_co-repressor_dom"/>
</dbReference>
<dbReference type="InterPro" id="IPR039040">
    <property type="entry name" value="NAB_fam"/>
</dbReference>
<dbReference type="InterPro" id="IPR006988">
    <property type="entry name" value="Nab_N"/>
</dbReference>
<dbReference type="InterPro" id="IPR038398">
    <property type="entry name" value="NCD2_sf"/>
</dbReference>
<dbReference type="InterPro" id="IPR013761">
    <property type="entry name" value="SAM/pointed_sf"/>
</dbReference>
<dbReference type="PANTHER" id="PTHR12623">
    <property type="entry name" value="NGFI-A BINDING PROTEIN"/>
    <property type="match status" value="1"/>
</dbReference>
<dbReference type="PANTHER" id="PTHR12623:SF6">
    <property type="entry name" value="NGFI-A-BINDING PROTEIN 2"/>
    <property type="match status" value="1"/>
</dbReference>
<dbReference type="Pfam" id="PF04905">
    <property type="entry name" value="NCD2"/>
    <property type="match status" value="1"/>
</dbReference>
<dbReference type="Pfam" id="PF04904">
    <property type="entry name" value="SAM_NCD1"/>
    <property type="match status" value="1"/>
</dbReference>
<feature type="chain" id="PRO_0000077042" description="NGFI-A-binding protein 2">
    <location>
        <begin position="1"/>
        <end position="525"/>
    </location>
</feature>
<feature type="region of interest" description="Disordered" evidence="3">
    <location>
        <begin position="1"/>
        <end position="22"/>
    </location>
</feature>
<feature type="region of interest" description="NCD1">
    <location>
        <begin position="35"/>
        <end position="113"/>
    </location>
</feature>
<feature type="region of interest" description="Disordered" evidence="3">
    <location>
        <begin position="135"/>
        <end position="237"/>
    </location>
</feature>
<feature type="region of interest" description="NCD2">
    <location>
        <begin position="267"/>
        <end position="356"/>
    </location>
</feature>
<feature type="region of interest" description="Necessary for nuclear localization" evidence="1">
    <location>
        <begin position="353"/>
        <end position="384"/>
    </location>
</feature>
<feature type="region of interest" description="Disordered" evidence="3">
    <location>
        <begin position="380"/>
        <end position="416"/>
    </location>
</feature>
<feature type="region of interest" description="Disordered" evidence="3">
    <location>
        <begin position="502"/>
        <end position="525"/>
    </location>
</feature>
<feature type="compositionally biased region" description="Gly residues" evidence="3">
    <location>
        <begin position="212"/>
        <end position="234"/>
    </location>
</feature>
<feature type="compositionally biased region" description="Basic and acidic residues" evidence="3">
    <location>
        <begin position="510"/>
        <end position="525"/>
    </location>
</feature>
<feature type="modified residue" description="Phosphoserine" evidence="7 8 10 11">
    <location>
        <position position="6"/>
    </location>
</feature>
<feature type="modified residue" description="Phosphoserine" evidence="2">
    <location>
        <position position="157"/>
    </location>
</feature>
<feature type="modified residue" description="Phosphoserine" evidence="9 10">
    <location>
        <position position="159"/>
    </location>
</feature>
<feature type="modified residue" description="Phosphoserine" evidence="9 10">
    <location>
        <position position="162"/>
    </location>
</feature>
<feature type="modified residue" description="Phosphoserine" evidence="10 11">
    <location>
        <position position="171"/>
    </location>
</feature>
<feature type="modified residue" description="Phosphoserine" evidence="2">
    <location>
        <position position="479"/>
    </location>
</feature>
<feature type="cross-link" description="Glycyl lysine isopeptide (Lys-Gly) (interchain with G-Cter in SUMO1)" evidence="4">
    <location>
        <position position="379"/>
    </location>
</feature>
<feature type="cross-link" description="Glycyl lysine isopeptide (Lys-Gly) (interchain with G-Cter in SUMO1); alternate" evidence="4">
    <location>
        <position position="517"/>
    </location>
</feature>
<feature type="cross-link" description="Glycyl lysine isopeptide (Lys-Gly) (interchain with G-Cter in SUMO2); alternate" evidence="12">
    <location>
        <position position="517"/>
    </location>
</feature>
<feature type="splice variant" id="VSP_003385" description="In isoform 2." evidence="5">
    <original>LTI</original>
    <variation>ASP</variation>
    <location>
        <begin position="320"/>
        <end position="322"/>
    </location>
</feature>
<feature type="splice variant" id="VSP_003386" description="In isoform 2." evidence="5">
    <location>
        <begin position="323"/>
        <end position="525"/>
    </location>
</feature>
<feature type="splice variant" id="VSP_003387" description="In isoform 3." evidence="6">
    <location>
        <begin position="426"/>
        <end position="489"/>
    </location>
</feature>
<feature type="sequence conflict" description="In Ref. 6 and 7." evidence="6" ref="6 7">
    <original>PR</original>
    <variation>Q</variation>
    <location>
        <begin position="257"/>
        <end position="258"/>
    </location>
</feature>
<gene>
    <name type="primary">NAB2</name>
    <name type="synonym">MADER</name>
</gene>